<accession>P0C513</accession>
<accession>P12206</accession>
<accession>Q6QXT9</accession>
<accession>Q6QY66</accession>
<evidence type="ECO:0000255" key="1">
    <source>
        <dbReference type="HAMAP-Rule" id="MF_00437"/>
    </source>
</evidence>
<evidence type="ECO:0000305" key="2"/>
<name>YCF4_ORYSA</name>
<dbReference type="EMBL" id="AY522331">
    <property type="protein sequence ID" value="AAS46192.1"/>
    <property type="status" value="ALT_INIT"/>
    <property type="molecule type" value="Genomic_DNA"/>
</dbReference>
<dbReference type="RefSeq" id="YP_009305315.1">
    <property type="nucleotide sequence ID" value="NC_031333.1"/>
</dbReference>
<dbReference type="GeneID" id="29141381"/>
<dbReference type="GO" id="GO:0009535">
    <property type="term" value="C:chloroplast thylakoid membrane"/>
    <property type="evidence" value="ECO:0007669"/>
    <property type="project" value="UniProtKB-SubCell"/>
</dbReference>
<dbReference type="GO" id="GO:0009522">
    <property type="term" value="C:photosystem I"/>
    <property type="evidence" value="ECO:0007669"/>
    <property type="project" value="InterPro"/>
</dbReference>
<dbReference type="GO" id="GO:0009536">
    <property type="term" value="C:plastid"/>
    <property type="evidence" value="ECO:0000305"/>
    <property type="project" value="Gramene"/>
</dbReference>
<dbReference type="GO" id="GO:0015979">
    <property type="term" value="P:photosynthesis"/>
    <property type="evidence" value="ECO:0007669"/>
    <property type="project" value="UniProtKB-UniRule"/>
</dbReference>
<dbReference type="HAMAP" id="MF_00437">
    <property type="entry name" value="Ycf4"/>
    <property type="match status" value="1"/>
</dbReference>
<dbReference type="InterPro" id="IPR003359">
    <property type="entry name" value="PSI_Ycf4_assembly"/>
</dbReference>
<dbReference type="PANTHER" id="PTHR33288">
    <property type="match status" value="1"/>
</dbReference>
<dbReference type="PANTHER" id="PTHR33288:SF4">
    <property type="entry name" value="PHOTOSYSTEM I ASSEMBLY PROTEIN YCF4"/>
    <property type="match status" value="1"/>
</dbReference>
<dbReference type="Pfam" id="PF02392">
    <property type="entry name" value="Ycf4"/>
    <property type="match status" value="1"/>
</dbReference>
<keyword id="KW-0150">Chloroplast</keyword>
<keyword id="KW-0472">Membrane</keyword>
<keyword id="KW-0602">Photosynthesis</keyword>
<keyword id="KW-0934">Plastid</keyword>
<keyword id="KW-0793">Thylakoid</keyword>
<keyword id="KW-0812">Transmembrane</keyword>
<keyword id="KW-1133">Transmembrane helix</keyword>
<geneLocation type="chloroplast"/>
<proteinExistence type="inferred from homology"/>
<gene>
    <name evidence="1" type="primary">ycf4</name>
    <name type="ORF">PA069</name>
</gene>
<feature type="chain" id="PRO_0000217619" description="Photosystem I assembly protein Ycf4">
    <location>
        <begin position="1"/>
        <end position="185"/>
    </location>
</feature>
<feature type="transmembrane region" description="Helical" evidence="1">
    <location>
        <begin position="21"/>
        <end position="43"/>
    </location>
</feature>
<feature type="transmembrane region" description="Helical" evidence="1">
    <location>
        <begin position="63"/>
        <end position="85"/>
    </location>
</feature>
<organism>
    <name type="scientific">Oryza sativa</name>
    <name type="common">Rice</name>
    <dbReference type="NCBI Taxonomy" id="4530"/>
    <lineage>
        <taxon>Eukaryota</taxon>
        <taxon>Viridiplantae</taxon>
        <taxon>Streptophyta</taxon>
        <taxon>Embryophyta</taxon>
        <taxon>Tracheophyta</taxon>
        <taxon>Spermatophyta</taxon>
        <taxon>Magnoliopsida</taxon>
        <taxon>Liliopsida</taxon>
        <taxon>Poales</taxon>
        <taxon>Poaceae</taxon>
        <taxon>BOP clade</taxon>
        <taxon>Oryzoideae</taxon>
        <taxon>Oryzeae</taxon>
        <taxon>Oryzinae</taxon>
        <taxon>Oryza</taxon>
    </lineage>
</organism>
<reference key="1">
    <citation type="journal article" date="2004" name="Plant Physiol.">
        <title>A comparison of rice chloroplast genomes.</title>
        <authorList>
            <person name="Tang J."/>
            <person name="Xia H."/>
            <person name="Cao M."/>
            <person name="Zhang X."/>
            <person name="Zeng W."/>
            <person name="Hu S."/>
            <person name="Tong W."/>
            <person name="Wang J."/>
            <person name="Wang J."/>
            <person name="Yu J."/>
            <person name="Yang H."/>
            <person name="Zhu L."/>
        </authorList>
    </citation>
    <scope>NUCLEOTIDE SEQUENCE [LARGE SCALE GENOMIC DNA]</scope>
    <source>
        <strain>cv. PA64s</strain>
    </source>
</reference>
<comment type="function">
    <text evidence="1">Seems to be required for the assembly of the photosystem I complex.</text>
</comment>
<comment type="subcellular location">
    <subcellularLocation>
        <location evidence="1">Plastid</location>
        <location evidence="1">Chloroplast thylakoid membrane</location>
        <topology evidence="1">Multi-pass membrane protein</topology>
    </subcellularLocation>
</comment>
<comment type="similarity">
    <text evidence="1">Belongs to the Ycf4 family.</text>
</comment>
<comment type="sequence caution" evidence="2">
    <conflict type="erroneous initiation">
        <sequence resource="EMBL-CDS" id="AAS46192"/>
    </conflict>
</comment>
<protein>
    <recommendedName>
        <fullName evidence="1">Photosystem I assembly protein Ycf4</fullName>
    </recommendedName>
</protein>
<sequence>MNWRSEHIWIELLKGSRKRGNFFWACILFLGSLGFLAVGASSYLGKNIISVLPSQQILFFPQGVVMSFYGIAGLFISAYLWCTILWNVGSGYDRFDRKEGVVCIFRWGFPGIKRRVFLRFLMRDIQSIRIQVKEGLFPRRILYMEIRGQGAIPLTRTDEKFFTPREIEQKAAELAYFLRIPMEVF</sequence>